<accession>P59200</accession>
<accession>P13252</accession>
<keyword id="KW-0227">DNA damage</keyword>
<keyword id="KW-0234">DNA repair</keyword>
<keyword id="KW-0235">DNA replication</keyword>
<keyword id="KW-0238">DNA-binding</keyword>
<keyword id="KW-0239">DNA-directed DNA polymerase</keyword>
<keyword id="KW-0269">Exonuclease</keyword>
<keyword id="KW-0378">Hydrolase</keyword>
<keyword id="KW-0540">Nuclease</keyword>
<keyword id="KW-0548">Nucleotidyltransferase</keyword>
<keyword id="KW-1185">Reference proteome</keyword>
<keyword id="KW-0808">Transferase</keyword>
<sequence length="877" mass="99164">MDKKKLLLIDGSSVAFRAFFALYQQLDRFKNAAGLHTNAIYGFQLMLSHLLERVEPSHILVAFDAGKTTFRTEMYADYKGGRAKTPDEFREQFPFIRELLDHMGIRHYELAQYEADDIIGTLDKLAEQDGFDITIVSGDKDLIQLTDEHTVVEISKKGVAEFEAFTPDYLMEEMGLTPAQFIDLKALMGDKSDNIPGVTKVGEKTGIKLLLEHGSLEGIYENIDGMKTSKMKENLINDKEQAFLSKTLATIDTKAPIAIGLEDLVYSGPDVENLGKFYDEMGFKQLKQALNMSSADVAEGLDFTIVDQISQDMLSEESIFHFELFGENYHTDNLVGFAWSCGDQLYATDKLELLQDPIFKDFLEKTSLRVYDFKKVKVLLQRFGVDLQAPAFDIRLAKYLLSTVEDNEIATIASLYGQTYLVDDETFYGKGVKKAIPEREKFLEHLACKLAVLVETEPILLEKLSENGQLELLYDMEQPLAFVLAKMEIAGIVVKKETLLEMQAENELVIEKLTQEIYELAGEEFNVNSPKQLGVLLFEKLGLPLEYTKKTKTGYSTAVDVLERLAPIAPIVKKILDYRQIAKIQSTYVIGLQDWILADGKIHTRYVQDLTQTGRLSSVDPNLQNIPARLEQGRLIRKAFVPEWEDSVLLSSDYSQIELRVLAHISKDEHLIKAFQEGADIHTSTAMRVFGIERPDNVTANDRRNAKAVNFGVVYGISDFGLSNNLGISRKEAKAYIDTYFERFPGIKNYMDEVVREARDKGYVETLFKRRRELPDINSRNFNIRGFAERTAINSPIQGSAADILKIAMIQLDKALVAGGYQTKMLLQVHDEIVLEVPKSELVEMKKLVKQTMEEAIQLSVPLIADENEGATWYEAK</sequence>
<evidence type="ECO:0000255" key="1"/>
<evidence type="ECO:0000305" key="2"/>
<feature type="chain" id="PRO_0000101254" description="DNA polymerase I">
    <location>
        <begin position="1"/>
        <end position="877"/>
    </location>
</feature>
<feature type="domain" description="5'-3' exonuclease" evidence="1">
    <location>
        <begin position="177"/>
        <end position="270"/>
    </location>
</feature>
<feature type="domain" description="3'-5' exonuclease" evidence="1">
    <location>
        <begin position="302"/>
        <end position="465"/>
    </location>
</feature>
<feature type="sequence conflict" description="In Ref. 1; AAA26954." evidence="2" ref="1">
    <original>R</original>
    <variation>A</variation>
    <location>
        <position position="790"/>
    </location>
</feature>
<organism>
    <name type="scientific">Streptococcus pneumoniae (strain ATCC BAA-255 / R6)</name>
    <dbReference type="NCBI Taxonomy" id="171101"/>
    <lineage>
        <taxon>Bacteria</taxon>
        <taxon>Bacillati</taxon>
        <taxon>Bacillota</taxon>
        <taxon>Bacilli</taxon>
        <taxon>Lactobacillales</taxon>
        <taxon>Streptococcaceae</taxon>
        <taxon>Streptococcus</taxon>
    </lineage>
</organism>
<dbReference type="EC" id="2.7.7.7"/>
<dbReference type="EMBL" id="J04479">
    <property type="protein sequence ID" value="AAA26954.1"/>
    <property type="molecule type" value="Genomic_DNA"/>
</dbReference>
<dbReference type="EMBL" id="AE007317">
    <property type="protein sequence ID" value="AAK98836.1"/>
    <property type="molecule type" value="Genomic_DNA"/>
</dbReference>
<dbReference type="PIR" id="A32949">
    <property type="entry name" value="A32949"/>
</dbReference>
<dbReference type="PIR" id="H97875">
    <property type="entry name" value="H97875"/>
</dbReference>
<dbReference type="RefSeq" id="NP_357626.1">
    <property type="nucleotide sequence ID" value="NC_003098.1"/>
</dbReference>
<dbReference type="RefSeq" id="WP_000358433.1">
    <property type="nucleotide sequence ID" value="NC_003098.1"/>
</dbReference>
<dbReference type="SMR" id="P59200"/>
<dbReference type="STRING" id="171101.spr0032"/>
<dbReference type="KEGG" id="spr:spr0032"/>
<dbReference type="PATRIC" id="fig|171101.6.peg.37"/>
<dbReference type="eggNOG" id="COG0258">
    <property type="taxonomic scope" value="Bacteria"/>
</dbReference>
<dbReference type="eggNOG" id="COG0749">
    <property type="taxonomic scope" value="Bacteria"/>
</dbReference>
<dbReference type="HOGENOM" id="CLU_004675_0_0_9"/>
<dbReference type="Proteomes" id="UP000000586">
    <property type="component" value="Chromosome"/>
</dbReference>
<dbReference type="GO" id="GO:0008408">
    <property type="term" value="F:3'-5' exonuclease activity"/>
    <property type="evidence" value="ECO:0007669"/>
    <property type="project" value="InterPro"/>
</dbReference>
<dbReference type="GO" id="GO:0008409">
    <property type="term" value="F:5'-3' exonuclease activity"/>
    <property type="evidence" value="ECO:0007669"/>
    <property type="project" value="InterPro"/>
</dbReference>
<dbReference type="GO" id="GO:0003677">
    <property type="term" value="F:DNA binding"/>
    <property type="evidence" value="ECO:0007669"/>
    <property type="project" value="UniProtKB-KW"/>
</dbReference>
<dbReference type="GO" id="GO:0003887">
    <property type="term" value="F:DNA-directed DNA polymerase activity"/>
    <property type="evidence" value="ECO:0000318"/>
    <property type="project" value="GO_Central"/>
</dbReference>
<dbReference type="GO" id="GO:0006261">
    <property type="term" value="P:DNA-templated DNA replication"/>
    <property type="evidence" value="ECO:0007669"/>
    <property type="project" value="InterPro"/>
</dbReference>
<dbReference type="GO" id="GO:0006302">
    <property type="term" value="P:double-strand break repair"/>
    <property type="evidence" value="ECO:0000318"/>
    <property type="project" value="GO_Central"/>
</dbReference>
<dbReference type="CDD" id="cd08637">
    <property type="entry name" value="DNA_pol_A_pol_I_C"/>
    <property type="match status" value="1"/>
</dbReference>
<dbReference type="CDD" id="cd06140">
    <property type="entry name" value="DNA_polA_I_Bacillus_like_exo"/>
    <property type="match status" value="1"/>
</dbReference>
<dbReference type="CDD" id="cd09898">
    <property type="entry name" value="H3TH_53EXO"/>
    <property type="match status" value="1"/>
</dbReference>
<dbReference type="CDD" id="cd09859">
    <property type="entry name" value="PIN_53EXO"/>
    <property type="match status" value="1"/>
</dbReference>
<dbReference type="FunFam" id="1.10.150.20:FF:000002">
    <property type="entry name" value="DNA polymerase I"/>
    <property type="match status" value="1"/>
</dbReference>
<dbReference type="FunFam" id="1.10.150.20:FF:000003">
    <property type="entry name" value="DNA polymerase I"/>
    <property type="match status" value="1"/>
</dbReference>
<dbReference type="FunFam" id="1.20.1060.10:FF:000001">
    <property type="entry name" value="DNA polymerase I"/>
    <property type="match status" value="1"/>
</dbReference>
<dbReference type="FunFam" id="3.40.50.1010:FF:000001">
    <property type="entry name" value="DNA polymerase I"/>
    <property type="match status" value="1"/>
</dbReference>
<dbReference type="Gene3D" id="3.30.70.370">
    <property type="match status" value="1"/>
</dbReference>
<dbReference type="Gene3D" id="1.10.150.20">
    <property type="entry name" value="5' to 3' exonuclease, C-terminal subdomain"/>
    <property type="match status" value="2"/>
</dbReference>
<dbReference type="Gene3D" id="3.40.50.1010">
    <property type="entry name" value="5'-nuclease"/>
    <property type="match status" value="1"/>
</dbReference>
<dbReference type="Gene3D" id="3.30.420.10">
    <property type="entry name" value="Ribonuclease H-like superfamily/Ribonuclease H"/>
    <property type="match status" value="1"/>
</dbReference>
<dbReference type="Gene3D" id="1.20.1060.10">
    <property type="entry name" value="Taq DNA Polymerase, Chain T, domain 4"/>
    <property type="match status" value="1"/>
</dbReference>
<dbReference type="InterPro" id="IPR002562">
    <property type="entry name" value="3'-5'_exonuclease_dom"/>
</dbReference>
<dbReference type="InterPro" id="IPR020046">
    <property type="entry name" value="5-3_exonucl_a-hlix_arch_N"/>
</dbReference>
<dbReference type="InterPro" id="IPR002421">
    <property type="entry name" value="5-3_exonuclease"/>
</dbReference>
<dbReference type="InterPro" id="IPR036279">
    <property type="entry name" value="5-3_exonuclease_C_sf"/>
</dbReference>
<dbReference type="InterPro" id="IPR019760">
    <property type="entry name" value="DNA-dir_DNA_pol_A_CS"/>
</dbReference>
<dbReference type="InterPro" id="IPR001098">
    <property type="entry name" value="DNA-dir_DNA_pol_A_palm_dom"/>
</dbReference>
<dbReference type="InterPro" id="IPR043502">
    <property type="entry name" value="DNA/RNA_pol_sf"/>
</dbReference>
<dbReference type="InterPro" id="IPR054690">
    <property type="entry name" value="DNA_polI_exonuclease"/>
</dbReference>
<dbReference type="InterPro" id="IPR020045">
    <property type="entry name" value="DNA_polI_H3TH"/>
</dbReference>
<dbReference type="InterPro" id="IPR018320">
    <property type="entry name" value="DNA_polymerase_1"/>
</dbReference>
<dbReference type="InterPro" id="IPR002298">
    <property type="entry name" value="DNA_polymerase_A"/>
</dbReference>
<dbReference type="InterPro" id="IPR008918">
    <property type="entry name" value="HhH2"/>
</dbReference>
<dbReference type="InterPro" id="IPR029060">
    <property type="entry name" value="PIN-like_dom_sf"/>
</dbReference>
<dbReference type="InterPro" id="IPR012337">
    <property type="entry name" value="RNaseH-like_sf"/>
</dbReference>
<dbReference type="InterPro" id="IPR036397">
    <property type="entry name" value="RNaseH_sf"/>
</dbReference>
<dbReference type="NCBIfam" id="TIGR00593">
    <property type="entry name" value="pola"/>
    <property type="match status" value="1"/>
</dbReference>
<dbReference type="NCBIfam" id="NF004397">
    <property type="entry name" value="PRK05755.1"/>
    <property type="match status" value="1"/>
</dbReference>
<dbReference type="PANTHER" id="PTHR10133">
    <property type="entry name" value="DNA POLYMERASE I"/>
    <property type="match status" value="1"/>
</dbReference>
<dbReference type="PANTHER" id="PTHR10133:SF27">
    <property type="entry name" value="DNA POLYMERASE NU"/>
    <property type="match status" value="1"/>
</dbReference>
<dbReference type="Pfam" id="PF01367">
    <property type="entry name" value="5_3_exonuc"/>
    <property type="match status" value="1"/>
</dbReference>
<dbReference type="Pfam" id="PF02739">
    <property type="entry name" value="5_3_exonuc_N"/>
    <property type="match status" value="1"/>
</dbReference>
<dbReference type="Pfam" id="PF00476">
    <property type="entry name" value="DNA_pol_A"/>
    <property type="match status" value="1"/>
</dbReference>
<dbReference type="Pfam" id="PF22619">
    <property type="entry name" value="DNA_polI_exo1"/>
    <property type="match status" value="1"/>
</dbReference>
<dbReference type="PRINTS" id="PR00868">
    <property type="entry name" value="DNAPOLI"/>
</dbReference>
<dbReference type="SMART" id="SM00474">
    <property type="entry name" value="35EXOc"/>
    <property type="match status" value="1"/>
</dbReference>
<dbReference type="SMART" id="SM00475">
    <property type="entry name" value="53EXOc"/>
    <property type="match status" value="1"/>
</dbReference>
<dbReference type="SMART" id="SM00279">
    <property type="entry name" value="HhH2"/>
    <property type="match status" value="1"/>
</dbReference>
<dbReference type="SMART" id="SM00482">
    <property type="entry name" value="POLAc"/>
    <property type="match status" value="1"/>
</dbReference>
<dbReference type="SUPFAM" id="SSF47807">
    <property type="entry name" value="5' to 3' exonuclease, C-terminal subdomain"/>
    <property type="match status" value="1"/>
</dbReference>
<dbReference type="SUPFAM" id="SSF56672">
    <property type="entry name" value="DNA/RNA polymerases"/>
    <property type="match status" value="1"/>
</dbReference>
<dbReference type="SUPFAM" id="SSF88723">
    <property type="entry name" value="PIN domain-like"/>
    <property type="match status" value="1"/>
</dbReference>
<dbReference type="SUPFAM" id="SSF53098">
    <property type="entry name" value="Ribonuclease H-like"/>
    <property type="match status" value="1"/>
</dbReference>
<dbReference type="PROSITE" id="PS00447">
    <property type="entry name" value="DNA_POLYMERASE_A"/>
    <property type="match status" value="1"/>
</dbReference>
<comment type="function">
    <text>In addition to polymerase activity, this DNA polymerase exhibits 3'-5' and 5'-3' exonuclease activity.</text>
</comment>
<comment type="catalytic activity">
    <reaction>
        <text>DNA(n) + a 2'-deoxyribonucleoside 5'-triphosphate = DNA(n+1) + diphosphate</text>
        <dbReference type="Rhea" id="RHEA:22508"/>
        <dbReference type="Rhea" id="RHEA-COMP:17339"/>
        <dbReference type="Rhea" id="RHEA-COMP:17340"/>
        <dbReference type="ChEBI" id="CHEBI:33019"/>
        <dbReference type="ChEBI" id="CHEBI:61560"/>
        <dbReference type="ChEBI" id="CHEBI:173112"/>
        <dbReference type="EC" id="2.7.7.7"/>
    </reaction>
</comment>
<comment type="subunit">
    <text>Single-chain monomer with multiple functions.</text>
</comment>
<comment type="similarity">
    <text evidence="2">Belongs to the DNA polymerase type-A family.</text>
</comment>
<reference key="1">
    <citation type="journal article" date="1989" name="J. Biol. Chem.">
        <title>Characterization of the polA gene of Streptococcus pneumoniae and comparison of the DNA polymerase I it encodes to homologous enzymes from Escherichia coli and phage T7.</title>
        <authorList>
            <person name="Lopez P."/>
            <person name="Martinez S."/>
            <person name="Diaz A."/>
            <person name="Espinosa M."/>
            <person name="Lacks S.A."/>
        </authorList>
    </citation>
    <scope>NUCLEOTIDE SEQUENCE [GENOMIC DNA]</scope>
</reference>
<reference key="2">
    <citation type="journal article" date="2001" name="J. Bacteriol.">
        <title>Genome of the bacterium Streptococcus pneumoniae strain R6.</title>
        <authorList>
            <person name="Hoskins J."/>
            <person name="Alborn W.E. Jr."/>
            <person name="Arnold J."/>
            <person name="Blaszczak L.C."/>
            <person name="Burgett S."/>
            <person name="DeHoff B.S."/>
            <person name="Estrem S.T."/>
            <person name="Fritz L."/>
            <person name="Fu D.-J."/>
            <person name="Fuller W."/>
            <person name="Geringer C."/>
            <person name="Gilmour R."/>
            <person name="Glass J.S."/>
            <person name="Khoja H."/>
            <person name="Kraft A.R."/>
            <person name="Lagace R.E."/>
            <person name="LeBlanc D.J."/>
            <person name="Lee L.N."/>
            <person name="Lefkowitz E.J."/>
            <person name="Lu J."/>
            <person name="Matsushima P."/>
            <person name="McAhren S.M."/>
            <person name="McHenney M."/>
            <person name="McLeaster K."/>
            <person name="Mundy C.W."/>
            <person name="Nicas T.I."/>
            <person name="Norris F.H."/>
            <person name="O'Gara M."/>
            <person name="Peery R.B."/>
            <person name="Robertson G.T."/>
            <person name="Rockey P."/>
            <person name="Sun P.-M."/>
            <person name="Winkler M.E."/>
            <person name="Yang Y."/>
            <person name="Young-Bellido M."/>
            <person name="Zhao G."/>
            <person name="Zook C.A."/>
            <person name="Baltz R.H."/>
            <person name="Jaskunas S.R."/>
            <person name="Rosteck P.R. Jr."/>
            <person name="Skatrud P.L."/>
            <person name="Glass J.I."/>
        </authorList>
    </citation>
    <scope>NUCLEOTIDE SEQUENCE [LARGE SCALE GENOMIC DNA]</scope>
    <source>
        <strain>ATCC BAA-255 / R6</strain>
    </source>
</reference>
<proteinExistence type="inferred from homology"/>
<name>DPO1_STRR6</name>
<gene>
    <name type="primary">polA</name>
    <name type="ordered locus">spr0032</name>
</gene>
<protein>
    <recommendedName>
        <fullName>DNA polymerase I</fullName>
        <shortName>POL I</shortName>
        <ecNumber>2.7.7.7</ecNumber>
    </recommendedName>
</protein>